<gene>
    <name evidence="1" type="primary">ribH</name>
    <name type="ordered locus">CBO2863</name>
    <name type="ordered locus">CLC_2762</name>
</gene>
<sequence length="154" mass="16576">MKIYEGRLTAEGLKVGIIVSRFNEFITSKLLAGSIDCLKRHGAKEDNIEVCWVPGAFEIPVIAKKMASKGKYDAVICLGAVIRGATPHFDYVSSEVSKGVAHVSLDKEVPVIFGVLTTDTIEQAIERAGTKAGNKGYDAAMSAIEMSNLMKVLD</sequence>
<organism>
    <name type="scientific">Clostridium botulinum (strain Hall / ATCC 3502 / NCTC 13319 / Type A)</name>
    <dbReference type="NCBI Taxonomy" id="441771"/>
    <lineage>
        <taxon>Bacteria</taxon>
        <taxon>Bacillati</taxon>
        <taxon>Bacillota</taxon>
        <taxon>Clostridia</taxon>
        <taxon>Eubacteriales</taxon>
        <taxon>Clostridiaceae</taxon>
        <taxon>Clostridium</taxon>
    </lineage>
</organism>
<reference key="1">
    <citation type="journal article" date="2007" name="Genome Res.">
        <title>Genome sequence of a proteolytic (Group I) Clostridium botulinum strain Hall A and comparative analysis of the clostridial genomes.</title>
        <authorList>
            <person name="Sebaihia M."/>
            <person name="Peck M.W."/>
            <person name="Minton N.P."/>
            <person name="Thomson N.R."/>
            <person name="Holden M.T.G."/>
            <person name="Mitchell W.J."/>
            <person name="Carter A.T."/>
            <person name="Bentley S.D."/>
            <person name="Mason D.R."/>
            <person name="Crossman L."/>
            <person name="Paul C.J."/>
            <person name="Ivens A."/>
            <person name="Wells-Bennik M.H.J."/>
            <person name="Davis I.J."/>
            <person name="Cerdeno-Tarraga A.M."/>
            <person name="Churcher C."/>
            <person name="Quail M.A."/>
            <person name="Chillingworth T."/>
            <person name="Feltwell T."/>
            <person name="Fraser A."/>
            <person name="Goodhead I."/>
            <person name="Hance Z."/>
            <person name="Jagels K."/>
            <person name="Larke N."/>
            <person name="Maddison M."/>
            <person name="Moule S."/>
            <person name="Mungall K."/>
            <person name="Norbertczak H."/>
            <person name="Rabbinowitsch E."/>
            <person name="Sanders M."/>
            <person name="Simmonds M."/>
            <person name="White B."/>
            <person name="Whithead S."/>
            <person name="Parkhill J."/>
        </authorList>
    </citation>
    <scope>NUCLEOTIDE SEQUENCE [LARGE SCALE GENOMIC DNA]</scope>
    <source>
        <strain>Hall / ATCC 3502 / NCTC 13319 / Type A</strain>
    </source>
</reference>
<reference key="2">
    <citation type="journal article" date="2007" name="PLoS ONE">
        <title>Analysis of the neurotoxin complex genes in Clostridium botulinum A1-A4 and B1 strains: BoNT/A3, /Ba4 and /B1 clusters are located within plasmids.</title>
        <authorList>
            <person name="Smith T.J."/>
            <person name="Hill K.K."/>
            <person name="Foley B.T."/>
            <person name="Detter J.C."/>
            <person name="Munk A.C."/>
            <person name="Bruce D.C."/>
            <person name="Doggett N.A."/>
            <person name="Smith L.A."/>
            <person name="Marks J.D."/>
            <person name="Xie G."/>
            <person name="Brettin T.S."/>
        </authorList>
    </citation>
    <scope>NUCLEOTIDE SEQUENCE [LARGE SCALE GENOMIC DNA]</scope>
    <source>
        <strain>Hall / ATCC 3502 / NCTC 13319 / Type A</strain>
    </source>
</reference>
<keyword id="KW-1185">Reference proteome</keyword>
<keyword id="KW-0686">Riboflavin biosynthesis</keyword>
<keyword id="KW-0808">Transferase</keyword>
<comment type="function">
    <text evidence="1">Catalyzes the formation of 6,7-dimethyl-8-ribityllumazine by condensation of 5-amino-6-(D-ribitylamino)uracil with 3,4-dihydroxy-2-butanone 4-phosphate. This is the penultimate step in the biosynthesis of riboflavin.</text>
</comment>
<comment type="catalytic activity">
    <reaction evidence="1">
        <text>(2S)-2-hydroxy-3-oxobutyl phosphate + 5-amino-6-(D-ribitylamino)uracil = 6,7-dimethyl-8-(1-D-ribityl)lumazine + phosphate + 2 H2O + H(+)</text>
        <dbReference type="Rhea" id="RHEA:26152"/>
        <dbReference type="ChEBI" id="CHEBI:15377"/>
        <dbReference type="ChEBI" id="CHEBI:15378"/>
        <dbReference type="ChEBI" id="CHEBI:15934"/>
        <dbReference type="ChEBI" id="CHEBI:43474"/>
        <dbReference type="ChEBI" id="CHEBI:58201"/>
        <dbReference type="ChEBI" id="CHEBI:58830"/>
        <dbReference type="EC" id="2.5.1.78"/>
    </reaction>
</comment>
<comment type="pathway">
    <text evidence="1">Cofactor biosynthesis; riboflavin biosynthesis; riboflavin from 2-hydroxy-3-oxobutyl phosphate and 5-amino-6-(D-ribitylamino)uracil: step 1/2.</text>
</comment>
<comment type="similarity">
    <text evidence="1">Belongs to the DMRL synthase family.</text>
</comment>
<dbReference type="EC" id="2.5.1.78" evidence="1"/>
<dbReference type="EMBL" id="CP000727">
    <property type="protein sequence ID" value="ABS38269.1"/>
    <property type="molecule type" value="Genomic_DNA"/>
</dbReference>
<dbReference type="EMBL" id="AM412317">
    <property type="protein sequence ID" value="CAL84429.1"/>
    <property type="molecule type" value="Genomic_DNA"/>
</dbReference>
<dbReference type="RefSeq" id="YP_001255362.1">
    <property type="nucleotide sequence ID" value="NC_009495.1"/>
</dbReference>
<dbReference type="RefSeq" id="YP_001388597.1">
    <property type="nucleotide sequence ID" value="NC_009698.1"/>
</dbReference>
<dbReference type="SMR" id="A5I5U9"/>
<dbReference type="GeneID" id="5184641"/>
<dbReference type="KEGG" id="cbh:CLC_2762"/>
<dbReference type="KEGG" id="cbo:CBO2863"/>
<dbReference type="PATRIC" id="fig|413999.7.peg.2847"/>
<dbReference type="HOGENOM" id="CLU_089358_1_1_9"/>
<dbReference type="UniPathway" id="UPA00275">
    <property type="reaction ID" value="UER00404"/>
</dbReference>
<dbReference type="PRO" id="PR:A5I5U9"/>
<dbReference type="Proteomes" id="UP000001986">
    <property type="component" value="Chromosome"/>
</dbReference>
<dbReference type="GO" id="GO:0005737">
    <property type="term" value="C:cytoplasm"/>
    <property type="evidence" value="ECO:0000318"/>
    <property type="project" value="GO_Central"/>
</dbReference>
<dbReference type="GO" id="GO:0005829">
    <property type="term" value="C:cytosol"/>
    <property type="evidence" value="ECO:0000318"/>
    <property type="project" value="GO_Central"/>
</dbReference>
<dbReference type="GO" id="GO:0009349">
    <property type="term" value="C:riboflavin synthase complex"/>
    <property type="evidence" value="ECO:0007669"/>
    <property type="project" value="InterPro"/>
</dbReference>
<dbReference type="GO" id="GO:0000906">
    <property type="term" value="F:6,7-dimethyl-8-ribityllumazine synthase activity"/>
    <property type="evidence" value="ECO:0000318"/>
    <property type="project" value="GO_Central"/>
</dbReference>
<dbReference type="GO" id="GO:0009231">
    <property type="term" value="P:riboflavin biosynthetic process"/>
    <property type="evidence" value="ECO:0000318"/>
    <property type="project" value="GO_Central"/>
</dbReference>
<dbReference type="CDD" id="cd09209">
    <property type="entry name" value="Lumazine_synthase-I"/>
    <property type="match status" value="1"/>
</dbReference>
<dbReference type="FunFam" id="3.40.50.960:FF:000001">
    <property type="entry name" value="6,7-dimethyl-8-ribityllumazine synthase"/>
    <property type="match status" value="1"/>
</dbReference>
<dbReference type="Gene3D" id="3.40.50.960">
    <property type="entry name" value="Lumazine/riboflavin synthase"/>
    <property type="match status" value="1"/>
</dbReference>
<dbReference type="HAMAP" id="MF_00178">
    <property type="entry name" value="Lumazine_synth"/>
    <property type="match status" value="1"/>
</dbReference>
<dbReference type="InterPro" id="IPR034964">
    <property type="entry name" value="LS"/>
</dbReference>
<dbReference type="InterPro" id="IPR002180">
    <property type="entry name" value="LS/RS"/>
</dbReference>
<dbReference type="InterPro" id="IPR036467">
    <property type="entry name" value="LS/RS_sf"/>
</dbReference>
<dbReference type="NCBIfam" id="TIGR00114">
    <property type="entry name" value="lumazine-synth"/>
    <property type="match status" value="1"/>
</dbReference>
<dbReference type="NCBIfam" id="NF000812">
    <property type="entry name" value="PRK00061.1-4"/>
    <property type="match status" value="1"/>
</dbReference>
<dbReference type="PANTHER" id="PTHR21058:SF0">
    <property type="entry name" value="6,7-DIMETHYL-8-RIBITYLLUMAZINE SYNTHASE"/>
    <property type="match status" value="1"/>
</dbReference>
<dbReference type="PANTHER" id="PTHR21058">
    <property type="entry name" value="6,7-DIMETHYL-8-RIBITYLLUMAZINE SYNTHASE DMRL SYNTHASE LUMAZINE SYNTHASE"/>
    <property type="match status" value="1"/>
</dbReference>
<dbReference type="Pfam" id="PF00885">
    <property type="entry name" value="DMRL_synthase"/>
    <property type="match status" value="1"/>
</dbReference>
<dbReference type="SUPFAM" id="SSF52121">
    <property type="entry name" value="Lumazine synthase"/>
    <property type="match status" value="1"/>
</dbReference>
<protein>
    <recommendedName>
        <fullName evidence="1">6,7-dimethyl-8-ribityllumazine synthase</fullName>
        <shortName evidence="1">DMRL synthase</shortName>
        <shortName evidence="1">LS</shortName>
        <shortName evidence="1">Lumazine synthase</shortName>
        <ecNumber evidence="1">2.5.1.78</ecNumber>
    </recommendedName>
</protein>
<evidence type="ECO:0000255" key="1">
    <source>
        <dbReference type="HAMAP-Rule" id="MF_00178"/>
    </source>
</evidence>
<feature type="chain" id="PRO_1000040403" description="6,7-dimethyl-8-ribityllumazine synthase">
    <location>
        <begin position="1"/>
        <end position="154"/>
    </location>
</feature>
<feature type="active site" description="Proton donor" evidence="1">
    <location>
        <position position="88"/>
    </location>
</feature>
<feature type="binding site" evidence="1">
    <location>
        <position position="22"/>
    </location>
    <ligand>
        <name>5-amino-6-(D-ribitylamino)uracil</name>
        <dbReference type="ChEBI" id="CHEBI:15934"/>
    </ligand>
</feature>
<feature type="binding site" evidence="1">
    <location>
        <begin position="56"/>
        <end position="58"/>
    </location>
    <ligand>
        <name>5-amino-6-(D-ribitylamino)uracil</name>
        <dbReference type="ChEBI" id="CHEBI:15934"/>
    </ligand>
</feature>
<feature type="binding site" evidence="1">
    <location>
        <begin position="80"/>
        <end position="82"/>
    </location>
    <ligand>
        <name>5-amino-6-(D-ribitylamino)uracil</name>
        <dbReference type="ChEBI" id="CHEBI:15934"/>
    </ligand>
</feature>
<feature type="binding site" evidence="1">
    <location>
        <begin position="85"/>
        <end position="86"/>
    </location>
    <ligand>
        <name>(2S)-2-hydroxy-3-oxobutyl phosphate</name>
        <dbReference type="ChEBI" id="CHEBI:58830"/>
    </ligand>
</feature>
<feature type="binding site" evidence="1">
    <location>
        <position position="113"/>
    </location>
    <ligand>
        <name>5-amino-6-(D-ribitylamino)uracil</name>
        <dbReference type="ChEBI" id="CHEBI:15934"/>
    </ligand>
</feature>
<feature type="binding site" evidence="1">
    <location>
        <position position="127"/>
    </location>
    <ligand>
        <name>(2S)-2-hydroxy-3-oxobutyl phosphate</name>
        <dbReference type="ChEBI" id="CHEBI:58830"/>
    </ligand>
</feature>
<name>RISB_CLOBH</name>
<proteinExistence type="inferred from homology"/>
<accession>A5I5U9</accession>
<accession>A7G732</accession>